<keyword id="KW-0025">Alternative splicing</keyword>
<keyword id="KW-0963">Cytoplasm</keyword>
<keyword id="KW-0378">Hydrolase</keyword>
<keyword id="KW-0460">Magnesium</keyword>
<keyword id="KW-0464">Manganese</keyword>
<keyword id="KW-0479">Metal-binding</keyword>
<keyword id="KW-0539">Nucleus</keyword>
<keyword id="KW-0904">Protein phosphatase</keyword>
<keyword id="KW-1185">Reference proteome</keyword>
<protein>
    <recommendedName>
        <fullName evidence="5">Probable protein phosphatase 2C 40</fullName>
        <shortName evidence="5">OsPP2C40</shortName>
        <ecNumber evidence="2">3.1.3.16</ecNumber>
    </recommendedName>
    <alternativeName>
        <fullName evidence="6">OsPP65</fullName>
    </alternativeName>
</protein>
<organism>
    <name type="scientific">Oryza sativa subsp. japonica</name>
    <name type="common">Rice</name>
    <dbReference type="NCBI Taxonomy" id="39947"/>
    <lineage>
        <taxon>Eukaryota</taxon>
        <taxon>Viridiplantae</taxon>
        <taxon>Streptophyta</taxon>
        <taxon>Embryophyta</taxon>
        <taxon>Tracheophyta</taxon>
        <taxon>Spermatophyta</taxon>
        <taxon>Magnoliopsida</taxon>
        <taxon>Liliopsida</taxon>
        <taxon>Poales</taxon>
        <taxon>Poaceae</taxon>
        <taxon>BOP clade</taxon>
        <taxon>Oryzoideae</taxon>
        <taxon>Oryzeae</taxon>
        <taxon>Oryzinae</taxon>
        <taxon>Oryza</taxon>
        <taxon>Oryza sativa</taxon>
    </lineage>
</organism>
<reference key="1">
    <citation type="journal article" date="2002" name="Nature">
        <title>Sequence and analysis of rice chromosome 4.</title>
        <authorList>
            <person name="Feng Q."/>
            <person name="Zhang Y."/>
            <person name="Hao P."/>
            <person name="Wang S."/>
            <person name="Fu G."/>
            <person name="Huang Y."/>
            <person name="Li Y."/>
            <person name="Zhu J."/>
            <person name="Liu Y."/>
            <person name="Hu X."/>
            <person name="Jia P."/>
            <person name="Zhang Y."/>
            <person name="Zhao Q."/>
            <person name="Ying K."/>
            <person name="Yu S."/>
            <person name="Tang Y."/>
            <person name="Weng Q."/>
            <person name="Zhang L."/>
            <person name="Lu Y."/>
            <person name="Mu J."/>
            <person name="Lu Y."/>
            <person name="Zhang L.S."/>
            <person name="Yu Z."/>
            <person name="Fan D."/>
            <person name="Liu X."/>
            <person name="Lu T."/>
            <person name="Li C."/>
            <person name="Wu Y."/>
            <person name="Sun T."/>
            <person name="Lei H."/>
            <person name="Li T."/>
            <person name="Hu H."/>
            <person name="Guan J."/>
            <person name="Wu M."/>
            <person name="Zhang R."/>
            <person name="Zhou B."/>
            <person name="Chen Z."/>
            <person name="Chen L."/>
            <person name="Jin Z."/>
            <person name="Wang R."/>
            <person name="Yin H."/>
            <person name="Cai Z."/>
            <person name="Ren S."/>
            <person name="Lv G."/>
            <person name="Gu W."/>
            <person name="Zhu G."/>
            <person name="Tu Y."/>
            <person name="Jia J."/>
            <person name="Zhang Y."/>
            <person name="Chen J."/>
            <person name="Kang H."/>
            <person name="Chen X."/>
            <person name="Shao C."/>
            <person name="Sun Y."/>
            <person name="Hu Q."/>
            <person name="Zhang X."/>
            <person name="Zhang W."/>
            <person name="Wang L."/>
            <person name="Ding C."/>
            <person name="Sheng H."/>
            <person name="Gu J."/>
            <person name="Chen S."/>
            <person name="Ni L."/>
            <person name="Zhu F."/>
            <person name="Chen W."/>
            <person name="Lan L."/>
            <person name="Lai Y."/>
            <person name="Cheng Z."/>
            <person name="Gu M."/>
            <person name="Jiang J."/>
            <person name="Li J."/>
            <person name="Hong G."/>
            <person name="Xue Y."/>
            <person name="Han B."/>
        </authorList>
    </citation>
    <scope>NUCLEOTIDE SEQUENCE [LARGE SCALE GENOMIC DNA]</scope>
    <source>
        <strain>cv. Nipponbare</strain>
    </source>
</reference>
<reference key="2">
    <citation type="journal article" date="2005" name="Nature">
        <title>The map-based sequence of the rice genome.</title>
        <authorList>
            <consortium name="International rice genome sequencing project (IRGSP)"/>
        </authorList>
    </citation>
    <scope>NUCLEOTIDE SEQUENCE [LARGE SCALE GENOMIC DNA]</scope>
    <source>
        <strain>cv. Nipponbare</strain>
    </source>
</reference>
<reference key="3">
    <citation type="journal article" date="2008" name="Nucleic Acids Res.">
        <title>The rice annotation project database (RAP-DB): 2008 update.</title>
        <authorList>
            <consortium name="The rice annotation project (RAP)"/>
        </authorList>
    </citation>
    <scope>GENOME REANNOTATION</scope>
    <source>
        <strain>cv. Nipponbare</strain>
    </source>
</reference>
<reference key="4">
    <citation type="journal article" date="2013" name="Rice">
        <title>Improvement of the Oryza sativa Nipponbare reference genome using next generation sequence and optical map data.</title>
        <authorList>
            <person name="Kawahara Y."/>
            <person name="de la Bastide M."/>
            <person name="Hamilton J.P."/>
            <person name="Kanamori H."/>
            <person name="McCombie W.R."/>
            <person name="Ouyang S."/>
            <person name="Schwartz D.C."/>
            <person name="Tanaka T."/>
            <person name="Wu J."/>
            <person name="Zhou S."/>
            <person name="Childs K.L."/>
            <person name="Davidson R.M."/>
            <person name="Lin H."/>
            <person name="Quesada-Ocampo L."/>
            <person name="Vaillancourt B."/>
            <person name="Sakai H."/>
            <person name="Lee S.S."/>
            <person name="Kim J."/>
            <person name="Numa H."/>
            <person name="Itoh T."/>
            <person name="Buell C.R."/>
            <person name="Matsumoto T."/>
        </authorList>
    </citation>
    <scope>GENOME REANNOTATION</scope>
    <source>
        <strain>cv. Nipponbare</strain>
    </source>
</reference>
<reference key="5">
    <citation type="journal article" date="2008" name="BMC Genomics">
        <title>Genome-wide and expression analysis of protein phosphatase 2C in rice and Arabidopsis.</title>
        <authorList>
            <person name="Xue T."/>
            <person name="Wang D."/>
            <person name="Zhang S."/>
            <person name="Ehlting J."/>
            <person name="Ni F."/>
            <person name="Jacab S."/>
            <person name="Zheng C."/>
            <person name="Zhong Y."/>
        </authorList>
    </citation>
    <scope>GENE FAMILY</scope>
    <scope>NOMENCLATURE</scope>
</reference>
<reference key="6">
    <citation type="journal article" date="2022" name="Rice">
        <title>OsPP65 Negatively Regulates Osmotic and Salt Stress Responses Through Regulating Phytohormone and Raffinose Family Oligosaccharide Metabolic Pathways in Rice.</title>
        <authorList>
            <person name="Liu Q."/>
            <person name="Ding J."/>
            <person name="Huang W."/>
            <person name="Yu H."/>
            <person name="Wu S."/>
            <person name="Li W."/>
            <person name="Mao X."/>
            <person name="Chen W."/>
            <person name="Xing J."/>
            <person name="Li C."/>
            <person name="Yan S."/>
        </authorList>
    </citation>
    <scope>FUNCTION</scope>
    <scope>TISSUE SPECIFICITY</scope>
    <scope>INDUCTION</scope>
    <scope>DISRUPTION PHENOTYPE</scope>
</reference>
<name>P2C40_ORYSJ</name>
<evidence type="ECO:0000250" key="1">
    <source>
        <dbReference type="UniProtKB" id="P35813"/>
    </source>
</evidence>
<evidence type="ECO:0000255" key="2">
    <source>
        <dbReference type="PROSITE-ProRule" id="PRU01082"/>
    </source>
</evidence>
<evidence type="ECO:0000256" key="3">
    <source>
        <dbReference type="SAM" id="MobiDB-lite"/>
    </source>
</evidence>
<evidence type="ECO:0000269" key="4">
    <source>
    </source>
</evidence>
<evidence type="ECO:0000303" key="5">
    <source>
    </source>
</evidence>
<evidence type="ECO:0000303" key="6">
    <source>
    </source>
</evidence>
<evidence type="ECO:0000305" key="7"/>
<evidence type="ECO:0000312" key="8">
    <source>
        <dbReference type="EMBL" id="BAF14845.2"/>
    </source>
</evidence>
<evidence type="ECO:0000312" key="9">
    <source>
        <dbReference type="EMBL" id="CAE01570.2"/>
    </source>
</evidence>
<feature type="chain" id="PRO_0000363287" description="Probable protein phosphatase 2C 40">
    <location>
        <begin position="1"/>
        <end position="461"/>
    </location>
</feature>
<feature type="domain" description="PPM-type phosphatase" evidence="2">
    <location>
        <begin position="57"/>
        <end position="321"/>
    </location>
</feature>
<feature type="region of interest" description="Disordered" evidence="3">
    <location>
        <begin position="34"/>
        <end position="63"/>
    </location>
</feature>
<feature type="region of interest" description="Disordered" evidence="3">
    <location>
        <begin position="439"/>
        <end position="461"/>
    </location>
</feature>
<feature type="compositionally biased region" description="Basic and acidic residues" evidence="3">
    <location>
        <begin position="439"/>
        <end position="453"/>
    </location>
</feature>
<feature type="binding site" evidence="1">
    <location>
        <position position="98"/>
    </location>
    <ligand>
        <name>Mn(2+)</name>
        <dbReference type="ChEBI" id="CHEBI:29035"/>
        <label>1</label>
    </ligand>
</feature>
<feature type="binding site" evidence="1">
    <location>
        <position position="98"/>
    </location>
    <ligand>
        <name>Mn(2+)</name>
        <dbReference type="ChEBI" id="CHEBI:29035"/>
        <label>2</label>
    </ligand>
</feature>
<feature type="binding site" evidence="1">
    <location>
        <position position="99"/>
    </location>
    <ligand>
        <name>Mn(2+)</name>
        <dbReference type="ChEBI" id="CHEBI:29035"/>
        <label>1</label>
    </ligand>
</feature>
<feature type="binding site" evidence="1">
    <location>
        <position position="273"/>
    </location>
    <ligand>
        <name>Mn(2+)</name>
        <dbReference type="ChEBI" id="CHEBI:29035"/>
        <label>2</label>
    </ligand>
</feature>
<feature type="binding site" evidence="1">
    <location>
        <position position="312"/>
    </location>
    <ligand>
        <name>Mn(2+)</name>
        <dbReference type="ChEBI" id="CHEBI:29035"/>
        <label>2</label>
    </ligand>
</feature>
<feature type="splice variant" id="VSP_036267" description="In isoform 2." evidence="7">
    <original>LDSEYPVRN</original>
    <variation>FVLCTLYPS</variation>
    <location>
        <begin position="384"/>
        <end position="392"/>
    </location>
</feature>
<feature type="splice variant" id="VSP_036268" description="In isoform 2." evidence="7">
    <location>
        <begin position="393"/>
        <end position="461"/>
    </location>
</feature>
<comment type="function">
    <text evidence="4">Mediates the negative regulation of osmotic and salt stress tolerance through regulation of the jasmonate and abscisic acid signaling pathways and modulation of the raffinose family oligosaccharide metabolism pathway.</text>
</comment>
<comment type="catalytic activity">
    <reaction evidence="2">
        <text>O-phospho-L-seryl-[protein] + H2O = L-seryl-[protein] + phosphate</text>
        <dbReference type="Rhea" id="RHEA:20629"/>
        <dbReference type="Rhea" id="RHEA-COMP:9863"/>
        <dbReference type="Rhea" id="RHEA-COMP:11604"/>
        <dbReference type="ChEBI" id="CHEBI:15377"/>
        <dbReference type="ChEBI" id="CHEBI:29999"/>
        <dbReference type="ChEBI" id="CHEBI:43474"/>
        <dbReference type="ChEBI" id="CHEBI:83421"/>
        <dbReference type="EC" id="3.1.3.16"/>
    </reaction>
</comment>
<comment type="catalytic activity">
    <reaction evidence="2">
        <text>O-phospho-L-threonyl-[protein] + H2O = L-threonyl-[protein] + phosphate</text>
        <dbReference type="Rhea" id="RHEA:47004"/>
        <dbReference type="Rhea" id="RHEA-COMP:11060"/>
        <dbReference type="Rhea" id="RHEA-COMP:11605"/>
        <dbReference type="ChEBI" id="CHEBI:15377"/>
        <dbReference type="ChEBI" id="CHEBI:30013"/>
        <dbReference type="ChEBI" id="CHEBI:43474"/>
        <dbReference type="ChEBI" id="CHEBI:61977"/>
        <dbReference type="EC" id="3.1.3.16"/>
    </reaction>
</comment>
<comment type="cofactor">
    <cofactor evidence="2">
        <name>Mg(2+)</name>
        <dbReference type="ChEBI" id="CHEBI:18420"/>
    </cofactor>
    <cofactor evidence="2">
        <name>Mn(2+)</name>
        <dbReference type="ChEBI" id="CHEBI:29035"/>
    </cofactor>
    <text evidence="2">Binds 2 magnesium or manganese ions per subunit.</text>
</comment>
<comment type="subcellular location">
    <subcellularLocation>
        <location evidence="4">Nucleus</location>
    </subcellularLocation>
    <subcellularLocation>
        <location evidence="4">Cytoplasm</location>
    </subcellularLocation>
</comment>
<comment type="alternative products">
    <event type="alternative splicing"/>
    <isoform>
        <id>Q7XTC7-1</id>
        <name>1</name>
        <sequence type="displayed"/>
    </isoform>
    <isoform>
        <id>Q7XTC7-2</id>
        <name>2</name>
        <sequence type="described" ref="VSP_036267 VSP_036268"/>
    </isoform>
</comment>
<comment type="tissue specificity">
    <text evidence="4">Expressed in leaves, leaf sheaths, panicles, nodes and internodes (PubMed:35779169). Expressed at low levels in roots and stems (PubMed:35779169).</text>
</comment>
<comment type="induction">
    <text evidence="4">Induced by cold stress, salt stress, osmotic stress, hydrogen peroxide, abscisic acid and jasmonate.</text>
</comment>
<comment type="disruption phenotype">
    <text evidence="4">No visible phenotype under normal growth conditions, but mutant plants show enhanced tolerance to osmotic and salt stresses.</text>
</comment>
<comment type="similarity">
    <text evidence="7">Belongs to the PP2C family.</text>
</comment>
<comment type="sequence caution" evidence="7">
    <conflict type="erroneous gene model prediction">
        <sequence resource="EMBL-CDS" id="BAF14845"/>
    </conflict>
</comment>
<comment type="sequence caution" evidence="7">
    <conflict type="erroneous gene model prediction">
        <sequence resource="EMBL-CDS" id="CAE01570"/>
    </conflict>
</comment>
<gene>
    <name evidence="8" type="ordered locus">Os04g0449400</name>
    <name evidence="7" type="ordered locus">LOC_Os04g37660</name>
    <name evidence="9" type="ORF">OSJNBa0064H22.20</name>
</gene>
<sequence>MAAAAAAATVEAVGVAGGRRRRSGSVALGDLLRREASAERASASASAGAGGRERERRPSVAAGQACRAKKGEDFALLKPACERLPAGGAPFSAFALFDGHNGSGAAVYAKENILSNVMCCVPADLSGDEWLAALPRALVAGFVKTDKDFQTRAHSSGTTVTFVIIDGYVVTVASVGDSRCVLEAEGTIYHLSADHRFDASEEEVGRVTECGGEVGRLNVVGGAEIGPLRCWPGGLCLSRSIGDQDVGEFIIPVPYVKQIKLSSAGGRIIISSDGVWDALTVDTAFSCARGLPPEAAADQIVKEAIASKGLRDDTTCIVIDIIPPEKISPTVQPAKKAGKGLFKNIFYKKATSDSPCHADKDQCTQPDLVEEVFEDGCPSLSRRLDSEYPVRNMFKLFICAICQVELESGQGISIHEGLSKSGKLRPWDGPFLCHSCQEKKEAMEGKRHSRDSSSRNSGSSE</sequence>
<proteinExistence type="evidence at transcript level"/>
<dbReference type="EC" id="3.1.3.16" evidence="2"/>
<dbReference type="EMBL" id="AL606448">
    <property type="protein sequence ID" value="CAE01570.2"/>
    <property type="status" value="ALT_SEQ"/>
    <property type="molecule type" value="Genomic_DNA"/>
</dbReference>
<dbReference type="EMBL" id="AP008210">
    <property type="protein sequence ID" value="BAF14845.2"/>
    <property type="status" value="ALT_SEQ"/>
    <property type="molecule type" value="Genomic_DNA"/>
</dbReference>
<dbReference type="EMBL" id="AP014960">
    <property type="status" value="NOT_ANNOTATED_CDS"/>
    <property type="molecule type" value="Genomic_DNA"/>
</dbReference>
<dbReference type="RefSeq" id="XP_015637125.1">
    <property type="nucleotide sequence ID" value="XM_015781639.1"/>
</dbReference>
<dbReference type="SMR" id="Q7XTC7"/>
<dbReference type="FunCoup" id="Q7XTC7">
    <property type="interactions" value="534"/>
</dbReference>
<dbReference type="STRING" id="39947.Q7XTC7"/>
<dbReference type="PaxDb" id="39947-Q7XTC7"/>
<dbReference type="EnsemblPlants" id="Os04t0449400-01">
    <molecule id="Q7XTC7-1"/>
    <property type="protein sequence ID" value="Os04t0449400-01"/>
    <property type="gene ID" value="Os04g0449400"/>
</dbReference>
<dbReference type="Gramene" id="Os04t0449400-01">
    <molecule id="Q7XTC7-1"/>
    <property type="protein sequence ID" value="Os04t0449400-01"/>
    <property type="gene ID" value="Os04g0449400"/>
</dbReference>
<dbReference type="KEGG" id="dosa:Os04g0449400"/>
<dbReference type="eggNOG" id="KOG0698">
    <property type="taxonomic scope" value="Eukaryota"/>
</dbReference>
<dbReference type="InParanoid" id="Q7XTC7"/>
<dbReference type="OrthoDB" id="10264738at2759"/>
<dbReference type="Proteomes" id="UP000000763">
    <property type="component" value="Chromosome 4"/>
</dbReference>
<dbReference type="Proteomes" id="UP000059680">
    <property type="component" value="Chromosome 4"/>
</dbReference>
<dbReference type="GO" id="GO:0005737">
    <property type="term" value="C:cytoplasm"/>
    <property type="evidence" value="ECO:0007669"/>
    <property type="project" value="UniProtKB-SubCell"/>
</dbReference>
<dbReference type="GO" id="GO:0005634">
    <property type="term" value="C:nucleus"/>
    <property type="evidence" value="ECO:0007669"/>
    <property type="project" value="UniProtKB-SubCell"/>
</dbReference>
<dbReference type="GO" id="GO:0046872">
    <property type="term" value="F:metal ion binding"/>
    <property type="evidence" value="ECO:0007669"/>
    <property type="project" value="UniProtKB-KW"/>
</dbReference>
<dbReference type="GO" id="GO:0004722">
    <property type="term" value="F:protein serine/threonine phosphatase activity"/>
    <property type="evidence" value="ECO:0000318"/>
    <property type="project" value="GO_Central"/>
</dbReference>
<dbReference type="GO" id="GO:1902531">
    <property type="term" value="P:regulation of intracellular signal transduction"/>
    <property type="evidence" value="ECO:0000318"/>
    <property type="project" value="GO_Central"/>
</dbReference>
<dbReference type="CDD" id="cd00143">
    <property type="entry name" value="PP2Cc"/>
    <property type="match status" value="1"/>
</dbReference>
<dbReference type="FunFam" id="3.60.40.10:FF:000022">
    <property type="entry name" value="probable protein phosphatase 2C 12"/>
    <property type="match status" value="1"/>
</dbReference>
<dbReference type="Gene3D" id="3.60.40.10">
    <property type="entry name" value="PPM-type phosphatase domain"/>
    <property type="match status" value="1"/>
</dbReference>
<dbReference type="InterPro" id="IPR015655">
    <property type="entry name" value="PP2C"/>
</dbReference>
<dbReference type="InterPro" id="IPR036457">
    <property type="entry name" value="PPM-type-like_dom_sf"/>
</dbReference>
<dbReference type="InterPro" id="IPR001932">
    <property type="entry name" value="PPM-type_phosphatase-like_dom"/>
</dbReference>
<dbReference type="PANTHER" id="PTHR47992">
    <property type="entry name" value="PROTEIN PHOSPHATASE"/>
    <property type="match status" value="1"/>
</dbReference>
<dbReference type="Pfam" id="PF00481">
    <property type="entry name" value="PP2C"/>
    <property type="match status" value="1"/>
</dbReference>
<dbReference type="SMART" id="SM00332">
    <property type="entry name" value="PP2Cc"/>
    <property type="match status" value="1"/>
</dbReference>
<dbReference type="SUPFAM" id="SSF81606">
    <property type="entry name" value="PP2C-like"/>
    <property type="match status" value="1"/>
</dbReference>
<dbReference type="PROSITE" id="PS51746">
    <property type="entry name" value="PPM_2"/>
    <property type="match status" value="1"/>
</dbReference>
<accession>Q7XTC7</accession>
<accession>Q0JCU2</accession>